<sequence length="124" mass="13360">MEQLVYIALLGALGCLCRYFLSGLVYQVFGTSFPYGTLAVNLIGAFLIGLVMEFSVRSAAIPPTLRFAITIGFLGGLTTFSTFSFETFRLLEDGALLIAFVNVLVSVVACLTCTWIGIMVARAL</sequence>
<keyword id="KW-0997">Cell inner membrane</keyword>
<keyword id="KW-1003">Cell membrane</keyword>
<keyword id="KW-0407">Ion channel</keyword>
<keyword id="KW-0406">Ion transport</keyword>
<keyword id="KW-0472">Membrane</keyword>
<keyword id="KW-0479">Metal-binding</keyword>
<keyword id="KW-0915">Sodium</keyword>
<keyword id="KW-0812">Transmembrane</keyword>
<keyword id="KW-1133">Transmembrane helix</keyword>
<keyword id="KW-0813">Transport</keyword>
<proteinExistence type="inferred from homology"/>
<organism>
    <name type="scientific">Geobacter sp. (strain M21)</name>
    <dbReference type="NCBI Taxonomy" id="443144"/>
    <lineage>
        <taxon>Bacteria</taxon>
        <taxon>Pseudomonadati</taxon>
        <taxon>Thermodesulfobacteriota</taxon>
        <taxon>Desulfuromonadia</taxon>
        <taxon>Geobacterales</taxon>
        <taxon>Geobacteraceae</taxon>
        <taxon>Geobacter</taxon>
    </lineage>
</organism>
<accession>C6E0U8</accession>
<name>FLUC_GEOSM</name>
<protein>
    <recommendedName>
        <fullName evidence="1">Fluoride-specific ion channel FluC</fullName>
    </recommendedName>
</protein>
<evidence type="ECO:0000255" key="1">
    <source>
        <dbReference type="HAMAP-Rule" id="MF_00454"/>
    </source>
</evidence>
<gene>
    <name evidence="1" type="primary">fluC</name>
    <name evidence="1" type="synonym">crcB</name>
    <name type="ordered locus">GM21_0714</name>
</gene>
<feature type="chain" id="PRO_1000206252" description="Fluoride-specific ion channel FluC">
    <location>
        <begin position="1"/>
        <end position="124"/>
    </location>
</feature>
<feature type="transmembrane region" description="Helical" evidence="1">
    <location>
        <begin position="5"/>
        <end position="25"/>
    </location>
</feature>
<feature type="transmembrane region" description="Helical" evidence="1">
    <location>
        <begin position="32"/>
        <end position="52"/>
    </location>
</feature>
<feature type="transmembrane region" description="Helical" evidence="1">
    <location>
        <begin position="67"/>
        <end position="87"/>
    </location>
</feature>
<feature type="transmembrane region" description="Helical" evidence="1">
    <location>
        <begin position="96"/>
        <end position="116"/>
    </location>
</feature>
<feature type="binding site" evidence="1">
    <location>
        <position position="75"/>
    </location>
    <ligand>
        <name>Na(+)</name>
        <dbReference type="ChEBI" id="CHEBI:29101"/>
        <note>structural</note>
    </ligand>
</feature>
<feature type="binding site" evidence="1">
    <location>
        <position position="78"/>
    </location>
    <ligand>
        <name>Na(+)</name>
        <dbReference type="ChEBI" id="CHEBI:29101"/>
        <note>structural</note>
    </ligand>
</feature>
<reference key="1">
    <citation type="submission" date="2009-07" db="EMBL/GenBank/DDBJ databases">
        <title>Complete sequence of Geobacter sp. M21.</title>
        <authorList>
            <consortium name="US DOE Joint Genome Institute"/>
            <person name="Lucas S."/>
            <person name="Copeland A."/>
            <person name="Lapidus A."/>
            <person name="Glavina del Rio T."/>
            <person name="Dalin E."/>
            <person name="Tice H."/>
            <person name="Bruce D."/>
            <person name="Goodwin L."/>
            <person name="Pitluck S."/>
            <person name="Saunders E."/>
            <person name="Brettin T."/>
            <person name="Detter J.C."/>
            <person name="Han C."/>
            <person name="Larimer F."/>
            <person name="Land M."/>
            <person name="Hauser L."/>
            <person name="Kyrpides N."/>
            <person name="Ovchinnikova G."/>
            <person name="Lovley D."/>
        </authorList>
    </citation>
    <scope>NUCLEOTIDE SEQUENCE [LARGE SCALE GENOMIC DNA]</scope>
    <source>
        <strain>M21</strain>
    </source>
</reference>
<comment type="function">
    <text evidence="1">Fluoride-specific ion channel. Important for reducing fluoride concentration in the cell, thus reducing its toxicity.</text>
</comment>
<comment type="catalytic activity">
    <reaction evidence="1">
        <text>fluoride(in) = fluoride(out)</text>
        <dbReference type="Rhea" id="RHEA:76159"/>
        <dbReference type="ChEBI" id="CHEBI:17051"/>
    </reaction>
    <physiologicalReaction direction="left-to-right" evidence="1">
        <dbReference type="Rhea" id="RHEA:76160"/>
    </physiologicalReaction>
</comment>
<comment type="activity regulation">
    <text evidence="1">Na(+) is not transported, but it plays an essential structural role and its presence is essential for fluoride channel function.</text>
</comment>
<comment type="subcellular location">
    <subcellularLocation>
        <location evidence="1">Cell inner membrane</location>
        <topology evidence="1">Multi-pass membrane protein</topology>
    </subcellularLocation>
</comment>
<comment type="similarity">
    <text evidence="1">Belongs to the fluoride channel Fluc/FEX (TC 1.A.43) family.</text>
</comment>
<dbReference type="EMBL" id="CP001661">
    <property type="protein sequence ID" value="ACT16788.1"/>
    <property type="molecule type" value="Genomic_DNA"/>
</dbReference>
<dbReference type="SMR" id="C6E0U8"/>
<dbReference type="STRING" id="443144.GM21_0714"/>
<dbReference type="KEGG" id="gem:GM21_0714"/>
<dbReference type="eggNOG" id="COG0239">
    <property type="taxonomic scope" value="Bacteria"/>
</dbReference>
<dbReference type="HOGENOM" id="CLU_114342_3_2_7"/>
<dbReference type="OrthoDB" id="9806299at2"/>
<dbReference type="GO" id="GO:0005886">
    <property type="term" value="C:plasma membrane"/>
    <property type="evidence" value="ECO:0007669"/>
    <property type="project" value="UniProtKB-SubCell"/>
</dbReference>
<dbReference type="GO" id="GO:0062054">
    <property type="term" value="F:fluoride channel activity"/>
    <property type="evidence" value="ECO:0007669"/>
    <property type="project" value="UniProtKB-UniRule"/>
</dbReference>
<dbReference type="GO" id="GO:0046872">
    <property type="term" value="F:metal ion binding"/>
    <property type="evidence" value="ECO:0007669"/>
    <property type="project" value="UniProtKB-KW"/>
</dbReference>
<dbReference type="GO" id="GO:0140114">
    <property type="term" value="P:cellular detoxification of fluoride"/>
    <property type="evidence" value="ECO:0007669"/>
    <property type="project" value="UniProtKB-UniRule"/>
</dbReference>
<dbReference type="HAMAP" id="MF_00454">
    <property type="entry name" value="FluC"/>
    <property type="match status" value="1"/>
</dbReference>
<dbReference type="InterPro" id="IPR003691">
    <property type="entry name" value="FluC"/>
</dbReference>
<dbReference type="NCBIfam" id="TIGR00494">
    <property type="entry name" value="crcB"/>
    <property type="match status" value="1"/>
</dbReference>
<dbReference type="PANTHER" id="PTHR28259">
    <property type="entry name" value="FLUORIDE EXPORT PROTEIN 1-RELATED"/>
    <property type="match status" value="1"/>
</dbReference>
<dbReference type="PANTHER" id="PTHR28259:SF1">
    <property type="entry name" value="FLUORIDE EXPORT PROTEIN 1-RELATED"/>
    <property type="match status" value="1"/>
</dbReference>
<dbReference type="Pfam" id="PF02537">
    <property type="entry name" value="CRCB"/>
    <property type="match status" value="1"/>
</dbReference>